<feature type="chain" id="PRO_0000070785" description="Chaperone protein DnaJ">
    <location>
        <begin position="1"/>
        <end position="374"/>
    </location>
</feature>
<feature type="domain" description="J" evidence="1">
    <location>
        <begin position="5"/>
        <end position="70"/>
    </location>
</feature>
<feature type="repeat" description="CXXCXGXG motif">
    <location>
        <begin position="143"/>
        <end position="150"/>
    </location>
</feature>
<feature type="repeat" description="CXXCXGXG motif">
    <location>
        <begin position="159"/>
        <end position="166"/>
    </location>
</feature>
<feature type="repeat" description="CXXCXGXG motif">
    <location>
        <begin position="181"/>
        <end position="188"/>
    </location>
</feature>
<feature type="repeat" description="CXXCXGXG motif">
    <location>
        <begin position="195"/>
        <end position="202"/>
    </location>
</feature>
<feature type="zinc finger region" description="CR-type" evidence="1">
    <location>
        <begin position="130"/>
        <end position="207"/>
    </location>
</feature>
<feature type="binding site" evidence="1">
    <location>
        <position position="143"/>
    </location>
    <ligand>
        <name>Zn(2+)</name>
        <dbReference type="ChEBI" id="CHEBI:29105"/>
        <label>1</label>
    </ligand>
</feature>
<feature type="binding site" evidence="1">
    <location>
        <position position="146"/>
    </location>
    <ligand>
        <name>Zn(2+)</name>
        <dbReference type="ChEBI" id="CHEBI:29105"/>
        <label>1</label>
    </ligand>
</feature>
<feature type="binding site" evidence="1">
    <location>
        <position position="159"/>
    </location>
    <ligand>
        <name>Zn(2+)</name>
        <dbReference type="ChEBI" id="CHEBI:29105"/>
        <label>2</label>
    </ligand>
</feature>
<feature type="binding site" evidence="1">
    <location>
        <position position="162"/>
    </location>
    <ligand>
        <name>Zn(2+)</name>
        <dbReference type="ChEBI" id="CHEBI:29105"/>
        <label>2</label>
    </ligand>
</feature>
<feature type="binding site" evidence="1">
    <location>
        <position position="181"/>
    </location>
    <ligand>
        <name>Zn(2+)</name>
        <dbReference type="ChEBI" id="CHEBI:29105"/>
        <label>2</label>
    </ligand>
</feature>
<feature type="binding site" evidence="1">
    <location>
        <position position="184"/>
    </location>
    <ligand>
        <name>Zn(2+)</name>
        <dbReference type="ChEBI" id="CHEBI:29105"/>
        <label>2</label>
    </ligand>
</feature>
<feature type="binding site" evidence="1">
    <location>
        <position position="195"/>
    </location>
    <ligand>
        <name>Zn(2+)</name>
        <dbReference type="ChEBI" id="CHEBI:29105"/>
        <label>1</label>
    </ligand>
</feature>
<feature type="binding site" evidence="1">
    <location>
        <position position="198"/>
    </location>
    <ligand>
        <name>Zn(2+)</name>
        <dbReference type="ChEBI" id="CHEBI:29105"/>
        <label>1</label>
    </ligand>
</feature>
<keyword id="KW-0143">Chaperone</keyword>
<keyword id="KW-0963">Cytoplasm</keyword>
<keyword id="KW-0235">DNA replication</keyword>
<keyword id="KW-0479">Metal-binding</keyword>
<keyword id="KW-1185">Reference proteome</keyword>
<keyword id="KW-0677">Repeat</keyword>
<keyword id="KW-0346">Stress response</keyword>
<keyword id="KW-0862">Zinc</keyword>
<keyword id="KW-0863">Zinc-finger</keyword>
<protein>
    <recommendedName>
        <fullName evidence="1">Chaperone protein DnaJ</fullName>
    </recommendedName>
</protein>
<dbReference type="EMBL" id="AJ749949">
    <property type="protein sequence ID" value="CAG45901.1"/>
    <property type="molecule type" value="Genomic_DNA"/>
</dbReference>
<dbReference type="RefSeq" id="WP_003029556.1">
    <property type="nucleotide sequence ID" value="NC_006570.2"/>
</dbReference>
<dbReference type="RefSeq" id="YP_170224.1">
    <property type="nucleotide sequence ID" value="NC_006570.2"/>
</dbReference>
<dbReference type="SMR" id="Q5NFG8"/>
<dbReference type="STRING" id="177416.FTT_1268c"/>
<dbReference type="DNASU" id="3191529"/>
<dbReference type="EnsemblBacteria" id="CAG45901">
    <property type="protein sequence ID" value="CAG45901"/>
    <property type="gene ID" value="FTT_1268c"/>
</dbReference>
<dbReference type="KEGG" id="ftu:FTT_1268c"/>
<dbReference type="eggNOG" id="COG0484">
    <property type="taxonomic scope" value="Bacteria"/>
</dbReference>
<dbReference type="OrthoDB" id="9779889at2"/>
<dbReference type="Proteomes" id="UP000001174">
    <property type="component" value="Chromosome"/>
</dbReference>
<dbReference type="GO" id="GO:0005737">
    <property type="term" value="C:cytoplasm"/>
    <property type="evidence" value="ECO:0007669"/>
    <property type="project" value="UniProtKB-SubCell"/>
</dbReference>
<dbReference type="GO" id="GO:0005524">
    <property type="term" value="F:ATP binding"/>
    <property type="evidence" value="ECO:0007669"/>
    <property type="project" value="InterPro"/>
</dbReference>
<dbReference type="GO" id="GO:0031072">
    <property type="term" value="F:heat shock protein binding"/>
    <property type="evidence" value="ECO:0007669"/>
    <property type="project" value="InterPro"/>
</dbReference>
<dbReference type="GO" id="GO:0051082">
    <property type="term" value="F:unfolded protein binding"/>
    <property type="evidence" value="ECO:0007669"/>
    <property type="project" value="UniProtKB-UniRule"/>
</dbReference>
<dbReference type="GO" id="GO:0008270">
    <property type="term" value="F:zinc ion binding"/>
    <property type="evidence" value="ECO:0007669"/>
    <property type="project" value="UniProtKB-UniRule"/>
</dbReference>
<dbReference type="GO" id="GO:0051085">
    <property type="term" value="P:chaperone cofactor-dependent protein refolding"/>
    <property type="evidence" value="ECO:0007669"/>
    <property type="project" value="TreeGrafter"/>
</dbReference>
<dbReference type="GO" id="GO:0006260">
    <property type="term" value="P:DNA replication"/>
    <property type="evidence" value="ECO:0007669"/>
    <property type="project" value="UniProtKB-KW"/>
</dbReference>
<dbReference type="GO" id="GO:0042026">
    <property type="term" value="P:protein refolding"/>
    <property type="evidence" value="ECO:0007669"/>
    <property type="project" value="TreeGrafter"/>
</dbReference>
<dbReference type="GO" id="GO:0009408">
    <property type="term" value="P:response to heat"/>
    <property type="evidence" value="ECO:0007669"/>
    <property type="project" value="InterPro"/>
</dbReference>
<dbReference type="CDD" id="cd06257">
    <property type="entry name" value="DnaJ"/>
    <property type="match status" value="1"/>
</dbReference>
<dbReference type="CDD" id="cd10747">
    <property type="entry name" value="DnaJ_C"/>
    <property type="match status" value="1"/>
</dbReference>
<dbReference type="CDD" id="cd10719">
    <property type="entry name" value="DnaJ_zf"/>
    <property type="match status" value="1"/>
</dbReference>
<dbReference type="FunFam" id="1.10.287.110:FF:000034">
    <property type="entry name" value="Chaperone protein DnaJ"/>
    <property type="match status" value="1"/>
</dbReference>
<dbReference type="FunFam" id="2.10.230.10:FF:000002">
    <property type="entry name" value="Molecular chaperone DnaJ"/>
    <property type="match status" value="1"/>
</dbReference>
<dbReference type="FunFam" id="2.60.260.20:FF:000004">
    <property type="entry name" value="Molecular chaperone DnaJ"/>
    <property type="match status" value="1"/>
</dbReference>
<dbReference type="Gene3D" id="1.10.287.110">
    <property type="entry name" value="DnaJ domain"/>
    <property type="match status" value="1"/>
</dbReference>
<dbReference type="Gene3D" id="2.10.230.10">
    <property type="entry name" value="Heat shock protein DnaJ, cysteine-rich domain"/>
    <property type="match status" value="1"/>
</dbReference>
<dbReference type="Gene3D" id="2.60.260.20">
    <property type="entry name" value="Urease metallochaperone UreE, N-terminal domain"/>
    <property type="match status" value="2"/>
</dbReference>
<dbReference type="HAMAP" id="MF_01152">
    <property type="entry name" value="DnaJ"/>
    <property type="match status" value="1"/>
</dbReference>
<dbReference type="InterPro" id="IPR012724">
    <property type="entry name" value="DnaJ"/>
</dbReference>
<dbReference type="InterPro" id="IPR002939">
    <property type="entry name" value="DnaJ_C"/>
</dbReference>
<dbReference type="InterPro" id="IPR001623">
    <property type="entry name" value="DnaJ_domain"/>
</dbReference>
<dbReference type="InterPro" id="IPR018253">
    <property type="entry name" value="DnaJ_domain_CS"/>
</dbReference>
<dbReference type="InterPro" id="IPR008971">
    <property type="entry name" value="HSP40/DnaJ_pept-bd"/>
</dbReference>
<dbReference type="InterPro" id="IPR001305">
    <property type="entry name" value="HSP_DnaJ_Cys-rich_dom"/>
</dbReference>
<dbReference type="InterPro" id="IPR036410">
    <property type="entry name" value="HSP_DnaJ_Cys-rich_dom_sf"/>
</dbReference>
<dbReference type="InterPro" id="IPR036869">
    <property type="entry name" value="J_dom_sf"/>
</dbReference>
<dbReference type="NCBIfam" id="TIGR02349">
    <property type="entry name" value="DnaJ_bact"/>
    <property type="match status" value="1"/>
</dbReference>
<dbReference type="NCBIfam" id="NF008035">
    <property type="entry name" value="PRK10767.1"/>
    <property type="match status" value="1"/>
</dbReference>
<dbReference type="PANTHER" id="PTHR43096:SF48">
    <property type="entry name" value="CHAPERONE PROTEIN DNAJ"/>
    <property type="match status" value="1"/>
</dbReference>
<dbReference type="PANTHER" id="PTHR43096">
    <property type="entry name" value="DNAJ HOMOLOG 1, MITOCHONDRIAL-RELATED"/>
    <property type="match status" value="1"/>
</dbReference>
<dbReference type="Pfam" id="PF00226">
    <property type="entry name" value="DnaJ"/>
    <property type="match status" value="1"/>
</dbReference>
<dbReference type="Pfam" id="PF01556">
    <property type="entry name" value="DnaJ_C"/>
    <property type="match status" value="1"/>
</dbReference>
<dbReference type="Pfam" id="PF00684">
    <property type="entry name" value="DnaJ_CXXCXGXG"/>
    <property type="match status" value="1"/>
</dbReference>
<dbReference type="PRINTS" id="PR00625">
    <property type="entry name" value="JDOMAIN"/>
</dbReference>
<dbReference type="SMART" id="SM00271">
    <property type="entry name" value="DnaJ"/>
    <property type="match status" value="1"/>
</dbReference>
<dbReference type="SUPFAM" id="SSF46565">
    <property type="entry name" value="Chaperone J-domain"/>
    <property type="match status" value="1"/>
</dbReference>
<dbReference type="SUPFAM" id="SSF57938">
    <property type="entry name" value="DnaJ/Hsp40 cysteine-rich domain"/>
    <property type="match status" value="1"/>
</dbReference>
<dbReference type="SUPFAM" id="SSF49493">
    <property type="entry name" value="HSP40/DnaJ peptide-binding domain"/>
    <property type="match status" value="2"/>
</dbReference>
<dbReference type="PROSITE" id="PS00636">
    <property type="entry name" value="DNAJ_1"/>
    <property type="match status" value="1"/>
</dbReference>
<dbReference type="PROSITE" id="PS50076">
    <property type="entry name" value="DNAJ_2"/>
    <property type="match status" value="1"/>
</dbReference>
<dbReference type="PROSITE" id="PS51188">
    <property type="entry name" value="ZF_CR"/>
    <property type="match status" value="1"/>
</dbReference>
<comment type="function">
    <text evidence="1">Participates actively in the response to hyperosmotic and heat shock by preventing the aggregation of stress-denatured proteins and by disaggregating proteins, also in an autonomous, DnaK-independent fashion. Unfolded proteins bind initially to DnaJ; upon interaction with the DnaJ-bound protein, DnaK hydrolyzes its bound ATP, resulting in the formation of a stable complex. GrpE releases ADP from DnaK; ATP binding to DnaK triggers the release of the substrate protein, thus completing the reaction cycle. Several rounds of ATP-dependent interactions between DnaJ, DnaK and GrpE are required for fully efficient folding. Also involved, together with DnaK and GrpE, in the DNA replication of plasmids through activation of initiation proteins.</text>
</comment>
<comment type="cofactor">
    <cofactor evidence="1">
        <name>Zn(2+)</name>
        <dbReference type="ChEBI" id="CHEBI:29105"/>
    </cofactor>
    <text evidence="1">Binds 2 Zn(2+) ions per monomer.</text>
</comment>
<comment type="subunit">
    <text evidence="1">Homodimer.</text>
</comment>
<comment type="subcellular location">
    <subcellularLocation>
        <location evidence="1">Cytoplasm</location>
    </subcellularLocation>
</comment>
<comment type="domain">
    <text evidence="1">The J domain is necessary and sufficient to stimulate DnaK ATPase activity. Zinc center 1 plays an important role in the autonomous, DnaK-independent chaperone activity of DnaJ. Zinc center 2 is essential for interaction with DnaK and for DnaJ activity.</text>
</comment>
<comment type="similarity">
    <text evidence="1">Belongs to the DnaJ family.</text>
</comment>
<proteinExistence type="inferred from homology"/>
<accession>Q5NFG8</accession>
<name>DNAJ_FRATT</name>
<reference key="1">
    <citation type="journal article" date="2005" name="Nat. Genet.">
        <title>The complete genome sequence of Francisella tularensis, the causative agent of tularemia.</title>
        <authorList>
            <person name="Larsson P."/>
            <person name="Oyston P.C.F."/>
            <person name="Chain P."/>
            <person name="Chu M.C."/>
            <person name="Duffield M."/>
            <person name="Fuxelius H.-H."/>
            <person name="Garcia E."/>
            <person name="Haelltorp G."/>
            <person name="Johansson D."/>
            <person name="Isherwood K.E."/>
            <person name="Karp P.D."/>
            <person name="Larsson E."/>
            <person name="Liu Y."/>
            <person name="Michell S."/>
            <person name="Prior J."/>
            <person name="Prior R."/>
            <person name="Malfatti S."/>
            <person name="Sjoestedt A."/>
            <person name="Svensson K."/>
            <person name="Thompson N."/>
            <person name="Vergez L."/>
            <person name="Wagg J.K."/>
            <person name="Wren B.W."/>
            <person name="Lindler L.E."/>
            <person name="Andersson S.G.E."/>
            <person name="Forsman M."/>
            <person name="Titball R.W."/>
        </authorList>
    </citation>
    <scope>NUCLEOTIDE SEQUENCE [LARGE SCALE GENOMIC DNA]</scope>
    <source>
        <strain>SCHU S4 / Schu 4</strain>
    </source>
</reference>
<organism>
    <name type="scientific">Francisella tularensis subsp. tularensis (strain SCHU S4 / Schu 4)</name>
    <dbReference type="NCBI Taxonomy" id="177416"/>
    <lineage>
        <taxon>Bacteria</taxon>
        <taxon>Pseudomonadati</taxon>
        <taxon>Pseudomonadota</taxon>
        <taxon>Gammaproteobacteria</taxon>
        <taxon>Thiotrichales</taxon>
        <taxon>Francisellaceae</taxon>
        <taxon>Francisella</taxon>
    </lineage>
</organism>
<evidence type="ECO:0000255" key="1">
    <source>
        <dbReference type="HAMAP-Rule" id="MF_01152"/>
    </source>
</evidence>
<sequence length="374" mass="41729">MQQKCYYEILNVSKTASGVEIKRAYRKLAMEYHPDRNPGDKEAEIKFKEISEAYEILSDDSKRSRYDQFGHAGVNQQSGFGGTGGFGGFEDIFDTFFGGGTSRGSNRSRASRGSDLEYTLEITLEEAFFGVEKEITIPRMESCDSCDGTGSKSRSKTTCHACHGQGTIRRQQGFFAFEQTCPVCNGTGYSITDPCDACYGNGKVKKQKTLKVKIPEGVDNGDRIRLQGEGDSGSNGAMNGDLYVQIIIKEHKIFERRDINLYCEMPISFTKACLGGDIKVPTLDGEVVLKVVPETQTGKVFRLREKGMKSLRGHRRGDLLCKVVVETPVNLSAEQKELLEKFADSLGEDYQSKHAPKSKTWFDNVKDYAKKFFE</sequence>
<gene>
    <name evidence="1" type="primary">dnaJ</name>
    <name type="ordered locus">FTT_1268c</name>
</gene>